<keyword id="KW-0028">Amino-acid biosynthesis</keyword>
<keyword id="KW-0963">Cytoplasm</keyword>
<keyword id="KW-0521">NADP</keyword>
<keyword id="KW-0560">Oxidoreductase</keyword>
<keyword id="KW-0641">Proline biosynthesis</keyword>
<comment type="function">
    <text evidence="1">Catalyzes the NADPH-dependent reduction of L-glutamate 5-phosphate into L-glutamate 5-semialdehyde and phosphate. The product spontaneously undergoes cyclization to form 1-pyrroline-5-carboxylate.</text>
</comment>
<comment type="catalytic activity">
    <reaction evidence="1">
        <text>L-glutamate 5-semialdehyde + phosphate + NADP(+) = L-glutamyl 5-phosphate + NADPH + H(+)</text>
        <dbReference type="Rhea" id="RHEA:19541"/>
        <dbReference type="ChEBI" id="CHEBI:15378"/>
        <dbReference type="ChEBI" id="CHEBI:43474"/>
        <dbReference type="ChEBI" id="CHEBI:57783"/>
        <dbReference type="ChEBI" id="CHEBI:58066"/>
        <dbReference type="ChEBI" id="CHEBI:58274"/>
        <dbReference type="ChEBI" id="CHEBI:58349"/>
        <dbReference type="EC" id="1.2.1.41"/>
    </reaction>
</comment>
<comment type="pathway">
    <text evidence="1">Amino-acid biosynthesis; L-proline biosynthesis; L-glutamate 5-semialdehyde from L-glutamate: step 2/2.</text>
</comment>
<comment type="subcellular location">
    <subcellularLocation>
        <location evidence="1">Cytoplasm</location>
    </subcellularLocation>
</comment>
<comment type="similarity">
    <text evidence="1">Belongs to the gamma-glutamyl phosphate reductase family.</text>
</comment>
<protein>
    <recommendedName>
        <fullName evidence="1">Gamma-glutamyl phosphate reductase</fullName>
        <shortName evidence="1">GPR</shortName>
        <ecNumber evidence="1">1.2.1.41</ecNumber>
    </recommendedName>
    <alternativeName>
        <fullName evidence="1">Glutamate-5-semialdehyde dehydrogenase</fullName>
    </alternativeName>
    <alternativeName>
        <fullName evidence="1">Glutamyl-gamma-semialdehyde dehydrogenase</fullName>
        <shortName evidence="1">GSA dehydrogenase</shortName>
    </alternativeName>
</protein>
<accession>Q112S1</accession>
<name>PROA_TRIEI</name>
<gene>
    <name evidence="1" type="primary">proA</name>
    <name type="ordered locus">Tery_2275</name>
</gene>
<reference key="1">
    <citation type="journal article" date="2015" name="Proc. Natl. Acad. Sci. U.S.A.">
        <title>Trichodesmium genome maintains abundant, widespread noncoding DNA in situ, despite oligotrophic lifestyle.</title>
        <authorList>
            <person name="Walworth N."/>
            <person name="Pfreundt U."/>
            <person name="Nelson W.C."/>
            <person name="Mincer T."/>
            <person name="Heidelberg J.F."/>
            <person name="Fu F."/>
            <person name="Waterbury J.B."/>
            <person name="Glavina del Rio T."/>
            <person name="Goodwin L."/>
            <person name="Kyrpides N.C."/>
            <person name="Land M.L."/>
            <person name="Woyke T."/>
            <person name="Hutchins D.A."/>
            <person name="Hess W.R."/>
            <person name="Webb E.A."/>
        </authorList>
    </citation>
    <scope>NUCLEOTIDE SEQUENCE [LARGE SCALE GENOMIC DNA]</scope>
    <source>
        <strain>IMS101</strain>
    </source>
</reference>
<sequence length="431" mass="46529">MVTEVSLIEIAKTTRQAAQKSAVLSTEAKNQAIEAVAQALEKATPKIITANQLDCRIAETDGIAKPLYNRLKMDEAKLNSAIEGLRNVATLRDPIGVVQIHRELDAGLILKRITCPLGVIGVVFEARPDAVIQISALAIKSGNGVILKGGKEATNSCLELVTAIRQGLSTTSVNPDGVQLLTTREETLELLKLDEYVDLIIPRGSNSFVKFVQENTQIPVLGHAEGICHVYVDKFADIQKAVKITIDAKTQYPAACNAAETLLVHTDVAAKFLSEVFPELEKRQVELRGDRATQQILSSVKEATDLDWATEYSDLVLSVKVVDSLDSAIAHINNYGSGHTDAIITEDGKAAEIFLAQIGSAGVFHNCSTRFSDGFRYGFGAEVGISTQKMPPRGPVGLEGLVTYKYQIVGDGHIAATYSGENAKPFTHQDF</sequence>
<dbReference type="EC" id="1.2.1.41" evidence="1"/>
<dbReference type="EMBL" id="CP000393">
    <property type="protein sequence ID" value="ABG51503.1"/>
    <property type="molecule type" value="Genomic_DNA"/>
</dbReference>
<dbReference type="RefSeq" id="WP_011611871.1">
    <property type="nucleotide sequence ID" value="NC_008312.1"/>
</dbReference>
<dbReference type="SMR" id="Q112S1"/>
<dbReference type="STRING" id="203124.Tery_2275"/>
<dbReference type="KEGG" id="ter:Tery_2275"/>
<dbReference type="eggNOG" id="COG0014">
    <property type="taxonomic scope" value="Bacteria"/>
</dbReference>
<dbReference type="HOGENOM" id="CLU_030231_0_1_3"/>
<dbReference type="OrthoDB" id="9809970at2"/>
<dbReference type="UniPathway" id="UPA00098">
    <property type="reaction ID" value="UER00360"/>
</dbReference>
<dbReference type="GO" id="GO:0005737">
    <property type="term" value="C:cytoplasm"/>
    <property type="evidence" value="ECO:0007669"/>
    <property type="project" value="UniProtKB-SubCell"/>
</dbReference>
<dbReference type="GO" id="GO:0004350">
    <property type="term" value="F:glutamate-5-semialdehyde dehydrogenase activity"/>
    <property type="evidence" value="ECO:0007669"/>
    <property type="project" value="UniProtKB-UniRule"/>
</dbReference>
<dbReference type="GO" id="GO:0050661">
    <property type="term" value="F:NADP binding"/>
    <property type="evidence" value="ECO:0007669"/>
    <property type="project" value="InterPro"/>
</dbReference>
<dbReference type="GO" id="GO:0055129">
    <property type="term" value="P:L-proline biosynthetic process"/>
    <property type="evidence" value="ECO:0007669"/>
    <property type="project" value="UniProtKB-UniRule"/>
</dbReference>
<dbReference type="CDD" id="cd07079">
    <property type="entry name" value="ALDH_F18-19_ProA-GPR"/>
    <property type="match status" value="1"/>
</dbReference>
<dbReference type="FunFam" id="3.40.309.10:FF:000006">
    <property type="entry name" value="Gamma-glutamyl phosphate reductase"/>
    <property type="match status" value="1"/>
</dbReference>
<dbReference type="Gene3D" id="3.40.605.10">
    <property type="entry name" value="Aldehyde Dehydrogenase, Chain A, domain 1"/>
    <property type="match status" value="1"/>
</dbReference>
<dbReference type="Gene3D" id="3.40.309.10">
    <property type="entry name" value="Aldehyde Dehydrogenase, Chain A, domain 2"/>
    <property type="match status" value="1"/>
</dbReference>
<dbReference type="HAMAP" id="MF_00412">
    <property type="entry name" value="ProA"/>
    <property type="match status" value="1"/>
</dbReference>
<dbReference type="InterPro" id="IPR016161">
    <property type="entry name" value="Ald_DH/histidinol_DH"/>
</dbReference>
<dbReference type="InterPro" id="IPR016163">
    <property type="entry name" value="Ald_DH_C"/>
</dbReference>
<dbReference type="InterPro" id="IPR016162">
    <property type="entry name" value="Ald_DH_N"/>
</dbReference>
<dbReference type="InterPro" id="IPR015590">
    <property type="entry name" value="Aldehyde_DH_dom"/>
</dbReference>
<dbReference type="InterPro" id="IPR020593">
    <property type="entry name" value="G-glutamylP_reductase_CS"/>
</dbReference>
<dbReference type="InterPro" id="IPR012134">
    <property type="entry name" value="Glu-5-SA_DH"/>
</dbReference>
<dbReference type="InterPro" id="IPR000965">
    <property type="entry name" value="GPR_dom"/>
</dbReference>
<dbReference type="NCBIfam" id="NF001221">
    <property type="entry name" value="PRK00197.1"/>
    <property type="match status" value="1"/>
</dbReference>
<dbReference type="NCBIfam" id="TIGR00407">
    <property type="entry name" value="proA"/>
    <property type="match status" value="1"/>
</dbReference>
<dbReference type="PANTHER" id="PTHR11063:SF8">
    <property type="entry name" value="DELTA-1-PYRROLINE-5-CARBOXYLATE SYNTHASE"/>
    <property type="match status" value="1"/>
</dbReference>
<dbReference type="PANTHER" id="PTHR11063">
    <property type="entry name" value="GLUTAMATE SEMIALDEHYDE DEHYDROGENASE"/>
    <property type="match status" value="1"/>
</dbReference>
<dbReference type="Pfam" id="PF00171">
    <property type="entry name" value="Aldedh"/>
    <property type="match status" value="1"/>
</dbReference>
<dbReference type="PIRSF" id="PIRSF000151">
    <property type="entry name" value="GPR"/>
    <property type="match status" value="1"/>
</dbReference>
<dbReference type="SUPFAM" id="SSF53720">
    <property type="entry name" value="ALDH-like"/>
    <property type="match status" value="1"/>
</dbReference>
<dbReference type="PROSITE" id="PS01223">
    <property type="entry name" value="PROA"/>
    <property type="match status" value="1"/>
</dbReference>
<feature type="chain" id="PRO_0000340926" description="Gamma-glutamyl phosphate reductase">
    <location>
        <begin position="1"/>
        <end position="431"/>
    </location>
</feature>
<evidence type="ECO:0000255" key="1">
    <source>
        <dbReference type="HAMAP-Rule" id="MF_00412"/>
    </source>
</evidence>
<organism>
    <name type="scientific">Trichodesmium erythraeum (strain IMS101)</name>
    <dbReference type="NCBI Taxonomy" id="203124"/>
    <lineage>
        <taxon>Bacteria</taxon>
        <taxon>Bacillati</taxon>
        <taxon>Cyanobacteriota</taxon>
        <taxon>Cyanophyceae</taxon>
        <taxon>Oscillatoriophycideae</taxon>
        <taxon>Oscillatoriales</taxon>
        <taxon>Microcoleaceae</taxon>
        <taxon>Trichodesmium</taxon>
    </lineage>
</organism>
<proteinExistence type="inferred from homology"/>